<dbReference type="EC" id="2.1.1.-"/>
<dbReference type="EMBL" id="CP000479">
    <property type="protein sequence ID" value="ABK68338.1"/>
    <property type="molecule type" value="Genomic_DNA"/>
</dbReference>
<dbReference type="RefSeq" id="WP_009979053.1">
    <property type="nucleotide sequence ID" value="NC_008595.1"/>
</dbReference>
<dbReference type="SMR" id="A0QKY9"/>
<dbReference type="KEGG" id="mav:MAV_4442"/>
<dbReference type="HOGENOM" id="CLU_056160_2_1_11"/>
<dbReference type="Proteomes" id="UP000001574">
    <property type="component" value="Chromosome"/>
</dbReference>
<dbReference type="GO" id="GO:0008168">
    <property type="term" value="F:methyltransferase activity"/>
    <property type="evidence" value="ECO:0007669"/>
    <property type="project" value="UniProtKB-KW"/>
</dbReference>
<dbReference type="GO" id="GO:0032259">
    <property type="term" value="P:methylation"/>
    <property type="evidence" value="ECO:0007669"/>
    <property type="project" value="UniProtKB-KW"/>
</dbReference>
<dbReference type="Gene3D" id="3.40.50.150">
    <property type="entry name" value="Vaccinia Virus protein VP39"/>
    <property type="match status" value="1"/>
</dbReference>
<dbReference type="InterPro" id="IPR007213">
    <property type="entry name" value="Ppm1/Ppm2/Tcmp"/>
</dbReference>
<dbReference type="InterPro" id="IPR029063">
    <property type="entry name" value="SAM-dependent_MTases_sf"/>
</dbReference>
<dbReference type="InterPro" id="IPR011610">
    <property type="entry name" value="SAM_mthyl_Trfase_ML2640-like"/>
</dbReference>
<dbReference type="NCBIfam" id="TIGR00027">
    <property type="entry name" value="mthyl_TIGR00027"/>
    <property type="match status" value="1"/>
</dbReference>
<dbReference type="PANTHER" id="PTHR43619">
    <property type="entry name" value="S-ADENOSYL-L-METHIONINE-DEPENDENT METHYLTRANSFERASE YKTD-RELATED"/>
    <property type="match status" value="1"/>
</dbReference>
<dbReference type="PANTHER" id="PTHR43619:SF2">
    <property type="entry name" value="S-ADENOSYL-L-METHIONINE-DEPENDENT METHYLTRANSFERASES SUPERFAMILY PROTEIN"/>
    <property type="match status" value="1"/>
</dbReference>
<dbReference type="Pfam" id="PF04072">
    <property type="entry name" value="LCM"/>
    <property type="match status" value="1"/>
</dbReference>
<dbReference type="SUPFAM" id="SSF53335">
    <property type="entry name" value="S-adenosyl-L-methionine-dependent methyltransferases"/>
    <property type="match status" value="1"/>
</dbReference>
<sequence length="306" mass="33612">MSEGRTDGDTWGPAQSVGATATMVAAARAVASQGPDALLDDPLAEPLVRAVGLDPFIRIVDGKLDFPDDPLFNRRARAEQITVRTRFFDDFFIDATEGGLRQAVILASGLDTRAYRLAWPAGTVVYEIDQPQVIAFKTDTLANLGAAPTAERRTISIDLRDDWPAALREGGFDVTRPTAWSAEGLLPYLPPEAQDRLFDNITALSAPGSRLATEHVPDPNAFSDERLARISERWQRLGLNLNAADLFYRGERNVVADYLTGKGWRVTPHPARQLYARNGFEFPEDEMRATFGEMSYVDATLTGGRG</sequence>
<feature type="chain" id="PRO_0000361109" description="Putative S-adenosyl-L-methionine-dependent methyltransferase MAV_4442">
    <location>
        <begin position="1"/>
        <end position="306"/>
    </location>
</feature>
<feature type="binding site" evidence="1">
    <location>
        <position position="129"/>
    </location>
    <ligand>
        <name>S-adenosyl-L-methionine</name>
        <dbReference type="ChEBI" id="CHEBI:59789"/>
    </ligand>
</feature>
<feature type="binding site" evidence="1">
    <location>
        <begin position="158"/>
        <end position="159"/>
    </location>
    <ligand>
        <name>S-adenosyl-L-methionine</name>
        <dbReference type="ChEBI" id="CHEBI:59789"/>
    </ligand>
</feature>
<keyword id="KW-0489">Methyltransferase</keyword>
<keyword id="KW-0949">S-adenosyl-L-methionine</keyword>
<keyword id="KW-0808">Transferase</keyword>
<accession>A0QKY9</accession>
<proteinExistence type="inferred from homology"/>
<protein>
    <recommendedName>
        <fullName>Putative S-adenosyl-L-methionine-dependent methyltransferase MAV_4442</fullName>
        <ecNumber>2.1.1.-</ecNumber>
    </recommendedName>
</protein>
<reference key="1">
    <citation type="submission" date="2006-10" db="EMBL/GenBank/DDBJ databases">
        <authorList>
            <person name="Fleischmann R.D."/>
            <person name="Dodson R.J."/>
            <person name="Haft D.H."/>
            <person name="Merkel J.S."/>
            <person name="Nelson W.C."/>
            <person name="Fraser C.M."/>
        </authorList>
    </citation>
    <scope>NUCLEOTIDE SEQUENCE [LARGE SCALE GENOMIC DNA]</scope>
    <source>
        <strain>104</strain>
    </source>
</reference>
<gene>
    <name type="ordered locus">MAV_4442</name>
</gene>
<comment type="function">
    <text evidence="1">Exhibits S-adenosyl-L-methionine-dependent methyltransferase activity.</text>
</comment>
<comment type="similarity">
    <text evidence="2">Belongs to the UPF0677 family.</text>
</comment>
<evidence type="ECO:0000250" key="1"/>
<evidence type="ECO:0000305" key="2"/>
<organism>
    <name type="scientific">Mycobacterium avium (strain 104)</name>
    <dbReference type="NCBI Taxonomy" id="243243"/>
    <lineage>
        <taxon>Bacteria</taxon>
        <taxon>Bacillati</taxon>
        <taxon>Actinomycetota</taxon>
        <taxon>Actinomycetes</taxon>
        <taxon>Mycobacteriales</taxon>
        <taxon>Mycobacteriaceae</taxon>
        <taxon>Mycobacterium</taxon>
        <taxon>Mycobacterium avium complex (MAC)</taxon>
    </lineage>
</organism>
<name>Y4442_MYCA1</name>